<sequence>MTLLPFTCLILLYSLGSVMSEKTNPNLTLHDVTDKLEGDDEKYATALKTCGEVFAEVEAIFNDENYLSHAGWFKDESNNEGDVVYAKDTPHGRMVTISTELPMPVEDVMKETWNGMEALPEWNQNINFAARIAAPTSNFDIVTYGNNDVLVVSGREFVSARIWRKVGDGFILASRSVTVPSFKSKHKGKVRAHLHLAGARFRPNPENPETTLTDVVMLADLKGYLPKMIVNQVIGRIMIMDTVTNRRHFQNLKAKRTNN</sequence>
<reference key="1">
    <citation type="journal article" date="1998" name="Science">
        <title>Genome sequence of the nematode C. elegans: a platform for investigating biology.</title>
        <authorList>
            <consortium name="The C. elegans sequencing consortium"/>
        </authorList>
    </citation>
    <scope>NUCLEOTIDE SEQUENCE [LARGE SCALE GENOMIC DNA]</scope>
    <source>
        <strain>Bristol N2</strain>
    </source>
</reference>
<keyword id="KW-1185">Reference proteome</keyword>
<keyword id="KW-0732">Signal</keyword>
<feature type="signal peptide" evidence="1">
    <location>
        <begin position="1"/>
        <end position="20"/>
    </location>
</feature>
<feature type="chain" id="PRO_0000220652" description="Steroidogenic acute regulatory-like protein 1">
    <location>
        <begin position="21"/>
        <end position="259"/>
    </location>
</feature>
<feature type="domain" description="START" evidence="2">
    <location>
        <begin position="43"/>
        <end position="254"/>
    </location>
</feature>
<accession>O17883</accession>
<evidence type="ECO:0000255" key="1"/>
<evidence type="ECO:0000255" key="2">
    <source>
        <dbReference type="PROSITE-ProRule" id="PRU00197"/>
    </source>
</evidence>
<gene>
    <name type="primary">strl-1</name>
    <name type="ORF">F52F12.7</name>
</gene>
<protein>
    <recommendedName>
        <fullName>Steroidogenic acute regulatory-like protein 1</fullName>
    </recommendedName>
</protein>
<dbReference type="EMBL" id="Z83228">
    <property type="protein sequence ID" value="CAB05736.2"/>
    <property type="molecule type" value="Genomic_DNA"/>
</dbReference>
<dbReference type="PIR" id="T22513">
    <property type="entry name" value="T22513"/>
</dbReference>
<dbReference type="RefSeq" id="NP_001251250.1">
    <property type="nucleotide sequence ID" value="NM_001264321.3"/>
</dbReference>
<dbReference type="SMR" id="O17883"/>
<dbReference type="FunCoup" id="O17883">
    <property type="interactions" value="366"/>
</dbReference>
<dbReference type="STRING" id="6239.F52F12.7a.1"/>
<dbReference type="PaxDb" id="6239-F52F12.7a"/>
<dbReference type="EnsemblMetazoa" id="F52F12.7a.1">
    <property type="protein sequence ID" value="F52F12.7a.1"/>
    <property type="gene ID" value="WBGene00009940"/>
</dbReference>
<dbReference type="GeneID" id="172846"/>
<dbReference type="KEGG" id="cel:CELE_F52F12.7"/>
<dbReference type="UCSC" id="F52F12.7">
    <property type="organism name" value="c. elegans"/>
</dbReference>
<dbReference type="AGR" id="WB:WBGene00009940"/>
<dbReference type="CTD" id="172846"/>
<dbReference type="WormBase" id="F52F12.7a">
    <property type="protein sequence ID" value="CE42711"/>
    <property type="gene ID" value="WBGene00009940"/>
    <property type="gene designation" value="strl-1"/>
</dbReference>
<dbReference type="eggNOG" id="KOG3845">
    <property type="taxonomic scope" value="Eukaryota"/>
</dbReference>
<dbReference type="HOGENOM" id="CLU_093963_0_0_1"/>
<dbReference type="InParanoid" id="O17883"/>
<dbReference type="OMA" id="PTPSAWI"/>
<dbReference type="OrthoDB" id="74575at2759"/>
<dbReference type="PhylomeDB" id="O17883"/>
<dbReference type="PRO" id="PR:O17883"/>
<dbReference type="Proteomes" id="UP000001940">
    <property type="component" value="Chromosome I"/>
</dbReference>
<dbReference type="Bgee" id="WBGene00009940">
    <property type="expression patterns" value="Expressed in germ line (C elegans) and 4 other cell types or tissues"/>
</dbReference>
<dbReference type="ExpressionAtlas" id="O17883">
    <property type="expression patterns" value="baseline and differential"/>
</dbReference>
<dbReference type="GO" id="GO:0140284">
    <property type="term" value="C:endoplasmic reticulum-endosome membrane contact site"/>
    <property type="evidence" value="ECO:0000318"/>
    <property type="project" value="GO_Central"/>
</dbReference>
<dbReference type="GO" id="GO:0031902">
    <property type="term" value="C:late endosome membrane"/>
    <property type="evidence" value="ECO:0000318"/>
    <property type="project" value="GO_Central"/>
</dbReference>
<dbReference type="GO" id="GO:0008289">
    <property type="term" value="F:lipid binding"/>
    <property type="evidence" value="ECO:0007669"/>
    <property type="project" value="InterPro"/>
</dbReference>
<dbReference type="GO" id="GO:0099044">
    <property type="term" value="P:vesicle tethering to endoplasmic reticulum"/>
    <property type="evidence" value="ECO:0000318"/>
    <property type="project" value="GO_Central"/>
</dbReference>
<dbReference type="Gene3D" id="3.30.530.20">
    <property type="match status" value="1"/>
</dbReference>
<dbReference type="InterPro" id="IPR000799">
    <property type="entry name" value="StAR-like"/>
</dbReference>
<dbReference type="InterPro" id="IPR051869">
    <property type="entry name" value="STARD3"/>
</dbReference>
<dbReference type="InterPro" id="IPR023393">
    <property type="entry name" value="START-like_dom_sf"/>
</dbReference>
<dbReference type="InterPro" id="IPR002913">
    <property type="entry name" value="START_lipid-bd_dom"/>
</dbReference>
<dbReference type="PANTHER" id="PTHR46121">
    <property type="entry name" value="STEROIDOGENIC ACUTE REGULATORY PROTEIN-LIKE"/>
    <property type="match status" value="1"/>
</dbReference>
<dbReference type="PANTHER" id="PTHR46121:SF3">
    <property type="entry name" value="STEROIDOGENIC ACUTE REGULATORY-LIKE PROTEIN 1"/>
    <property type="match status" value="1"/>
</dbReference>
<dbReference type="Pfam" id="PF01852">
    <property type="entry name" value="START"/>
    <property type="match status" value="1"/>
</dbReference>
<dbReference type="PRINTS" id="PR00978">
    <property type="entry name" value="STARPROTEIN"/>
</dbReference>
<dbReference type="SMART" id="SM00234">
    <property type="entry name" value="START"/>
    <property type="match status" value="1"/>
</dbReference>
<dbReference type="SUPFAM" id="SSF55961">
    <property type="entry name" value="Bet v1-like"/>
    <property type="match status" value="1"/>
</dbReference>
<dbReference type="PROSITE" id="PS50848">
    <property type="entry name" value="START"/>
    <property type="match status" value="1"/>
</dbReference>
<name>STAL1_CAEEL</name>
<proteinExistence type="inferred from homology"/>
<organism>
    <name type="scientific">Caenorhabditis elegans</name>
    <dbReference type="NCBI Taxonomy" id="6239"/>
    <lineage>
        <taxon>Eukaryota</taxon>
        <taxon>Metazoa</taxon>
        <taxon>Ecdysozoa</taxon>
        <taxon>Nematoda</taxon>
        <taxon>Chromadorea</taxon>
        <taxon>Rhabditida</taxon>
        <taxon>Rhabditina</taxon>
        <taxon>Rhabditomorpha</taxon>
        <taxon>Rhabditoidea</taxon>
        <taxon>Rhabditidae</taxon>
        <taxon>Peloderinae</taxon>
        <taxon>Caenorhabditis</taxon>
    </lineage>
</organism>